<accession>P23535</accession>
<protein>
    <recommendedName>
        <fullName>Glucan endo-1,3-beta-glucosidase, basic isoform</fullName>
        <ecNumber>3.2.1.39</ecNumber>
    </recommendedName>
    <alternativeName>
        <fullName>(1-&gt;3)-beta-glucan endohydrolase</fullName>
        <shortName>(1-&gt;3)-beta-glucanase</shortName>
    </alternativeName>
    <alternativeName>
        <fullName>Beta-1,3-endoglucanase</fullName>
    </alternativeName>
</protein>
<comment type="function">
    <text>Implicated in the defense of plants against pathogens.</text>
</comment>
<comment type="catalytic activity">
    <reaction>
        <text>Hydrolysis of (1-&gt;3)-beta-D-glucosidic linkages in (1-&gt;3)-beta-D-glucans.</text>
        <dbReference type="EC" id="3.2.1.39"/>
    </reaction>
</comment>
<comment type="subcellular location">
    <subcellularLocation>
        <location evidence="1">Vacuole</location>
    </subcellularLocation>
</comment>
<comment type="induction">
    <text>By fungal elicitor.</text>
</comment>
<comment type="similarity">
    <text evidence="4">Belongs to the glycosyl hydrolase 17 family.</text>
</comment>
<evidence type="ECO:0000250" key="1"/>
<evidence type="ECO:0000250" key="2">
    <source>
        <dbReference type="UniProtKB" id="O22317"/>
    </source>
</evidence>
<evidence type="ECO:0000250" key="3">
    <source>
        <dbReference type="UniProtKB" id="P15797"/>
    </source>
</evidence>
<evidence type="ECO:0000305" key="4"/>
<reference key="1">
    <citation type="journal article" date="1991" name="Plant Mol. Biol.">
        <title>cDNA cloning and characterization of a putative 1,3-beta-D-glucanase transcript induced by fungal elicitor in bean cell suspension cultures.</title>
        <authorList>
            <person name="Edington B.V."/>
            <person name="Lamb C.J."/>
            <person name="Dixon R.A."/>
        </authorList>
    </citation>
    <scope>NUCLEOTIDE SEQUENCE [MRNA]</scope>
</reference>
<organism>
    <name type="scientific">Phaseolus vulgaris</name>
    <name type="common">Kidney bean</name>
    <name type="synonym">French bean</name>
    <dbReference type="NCBI Taxonomy" id="3885"/>
    <lineage>
        <taxon>Eukaryota</taxon>
        <taxon>Viridiplantae</taxon>
        <taxon>Streptophyta</taxon>
        <taxon>Embryophyta</taxon>
        <taxon>Tracheophyta</taxon>
        <taxon>Spermatophyta</taxon>
        <taxon>Magnoliopsida</taxon>
        <taxon>eudicotyledons</taxon>
        <taxon>Gunneridae</taxon>
        <taxon>Pentapetalae</taxon>
        <taxon>rosids</taxon>
        <taxon>fabids</taxon>
        <taxon>Fabales</taxon>
        <taxon>Fabaceae</taxon>
        <taxon>Papilionoideae</taxon>
        <taxon>50 kb inversion clade</taxon>
        <taxon>NPAAA clade</taxon>
        <taxon>indigoferoid/millettioid clade</taxon>
        <taxon>Phaseoleae</taxon>
        <taxon>Phaseolus</taxon>
    </lineage>
</organism>
<dbReference type="EC" id="3.2.1.39"/>
<dbReference type="EMBL" id="X53129">
    <property type="protein sequence ID" value="CAA37289.1"/>
    <property type="molecule type" value="mRNA"/>
</dbReference>
<dbReference type="PIR" id="S13323">
    <property type="entry name" value="S13323"/>
</dbReference>
<dbReference type="SMR" id="P23535"/>
<dbReference type="CAZy" id="GH17">
    <property type="family name" value="Glycoside Hydrolase Family 17"/>
</dbReference>
<dbReference type="eggNOG" id="ENOG502QQ3M">
    <property type="taxonomic scope" value="Eukaryota"/>
</dbReference>
<dbReference type="GO" id="GO:0005773">
    <property type="term" value="C:vacuole"/>
    <property type="evidence" value="ECO:0007669"/>
    <property type="project" value="UniProtKB-SubCell"/>
</dbReference>
<dbReference type="GO" id="GO:0042973">
    <property type="term" value="F:glucan endo-1,3-beta-D-glucosidase activity"/>
    <property type="evidence" value="ECO:0007669"/>
    <property type="project" value="UniProtKB-EC"/>
</dbReference>
<dbReference type="GO" id="GO:0005975">
    <property type="term" value="P:carbohydrate metabolic process"/>
    <property type="evidence" value="ECO:0007669"/>
    <property type="project" value="InterPro"/>
</dbReference>
<dbReference type="GO" id="GO:0006952">
    <property type="term" value="P:defense response"/>
    <property type="evidence" value="ECO:0007669"/>
    <property type="project" value="UniProtKB-KW"/>
</dbReference>
<dbReference type="FunFam" id="3.20.20.80:FF:000010">
    <property type="entry name" value="glucan endo-1,3-beta-glucosidase, basic"/>
    <property type="match status" value="1"/>
</dbReference>
<dbReference type="Gene3D" id="3.20.20.80">
    <property type="entry name" value="Glycosidases"/>
    <property type="match status" value="1"/>
</dbReference>
<dbReference type="InterPro" id="IPR000490">
    <property type="entry name" value="Glyco_hydro_17"/>
</dbReference>
<dbReference type="InterPro" id="IPR044965">
    <property type="entry name" value="Glyco_hydro_17_plant"/>
</dbReference>
<dbReference type="InterPro" id="IPR017853">
    <property type="entry name" value="Glycoside_hydrolase_SF"/>
</dbReference>
<dbReference type="PANTHER" id="PTHR32227">
    <property type="entry name" value="GLUCAN ENDO-1,3-BETA-GLUCOSIDASE BG1-RELATED-RELATED"/>
    <property type="match status" value="1"/>
</dbReference>
<dbReference type="Pfam" id="PF00332">
    <property type="entry name" value="Glyco_hydro_17"/>
    <property type="match status" value="1"/>
</dbReference>
<dbReference type="SUPFAM" id="SSF51445">
    <property type="entry name" value="(Trans)glycosidases"/>
    <property type="match status" value="1"/>
</dbReference>
<dbReference type="PROSITE" id="PS00587">
    <property type="entry name" value="GLYCOSYL_HYDROL_F17"/>
    <property type="match status" value="1"/>
</dbReference>
<sequence length="348" mass="38869">QIGVCYGMMGNNLPSANEVINLYRSNNIRRMRLYDPNQAALQALRNSGIELILGVPNSDLQGLATNADTARQWVQRNVLNFWPSVKIKYIAVGNEVSPVGGSSWYAQYVLPAVQNVYQAVRAQGLHDQIKVSTAIDMTLIGNSYPPSQGSFRGDVRSYLDPIIGYLLYASAPLHVNVYPYFSYSGNPRDISLPYALFTSPNVVVRDGQYGYQNLFDAMLDSVHAAIDNTRIGYVEVVVSESGWPSDGGFGATYDNARVYLDNLVRRAGRGSPRRPSKPTETYIFAMFDENQKSPEIEKHFGLFKPSKEKKYPFGFGAQRMQRLLLMSSMQHIPLRVTCKLEPSSQSLL</sequence>
<feature type="chain" id="PRO_0000011857" description="Glucan endo-1,3-beta-glucosidase, basic isoform">
    <location>
        <begin position="1"/>
        <end position="316"/>
    </location>
</feature>
<feature type="propeptide" id="PRO_0000011858" description="Removed in mature form" evidence="1">
    <location>
        <begin position="317"/>
        <end position="348"/>
    </location>
</feature>
<feature type="active site" description="Proton donor" evidence="2">
    <location>
        <position position="95"/>
    </location>
</feature>
<feature type="active site" description="Nucleophile" evidence="2">
    <location>
        <position position="240"/>
    </location>
</feature>
<feature type="modified residue" description="Pyrrolidone carboxylic acid" evidence="3">
    <location>
        <position position="1"/>
    </location>
</feature>
<keyword id="KW-0326">Glycosidase</keyword>
<keyword id="KW-0378">Hydrolase</keyword>
<keyword id="KW-0611">Plant defense</keyword>
<keyword id="KW-0873">Pyrrolidone carboxylic acid</keyword>
<keyword id="KW-0926">Vacuole</keyword>
<name>E13B_PHAVU</name>
<proteinExistence type="evidence at transcript level"/>